<name>MNMA_STRPJ</name>
<accession>B8ZK04</accession>
<feature type="chain" id="PRO_1000198630" description="tRNA-specific 2-thiouridylase MnmA">
    <location>
        <begin position="1"/>
        <end position="373"/>
    </location>
</feature>
<feature type="region of interest" description="Interaction with target base in tRNA" evidence="1">
    <location>
        <begin position="98"/>
        <end position="100"/>
    </location>
</feature>
<feature type="region of interest" description="Interaction with tRNA" evidence="1">
    <location>
        <begin position="150"/>
        <end position="152"/>
    </location>
</feature>
<feature type="region of interest" description="Interaction with tRNA" evidence="1">
    <location>
        <begin position="312"/>
        <end position="313"/>
    </location>
</feature>
<feature type="active site" description="Nucleophile" evidence="1">
    <location>
        <position position="103"/>
    </location>
</feature>
<feature type="active site" description="Cysteine persulfide intermediate" evidence="1">
    <location>
        <position position="200"/>
    </location>
</feature>
<feature type="binding site" evidence="1">
    <location>
        <begin position="12"/>
        <end position="19"/>
    </location>
    <ligand>
        <name>ATP</name>
        <dbReference type="ChEBI" id="CHEBI:30616"/>
    </ligand>
</feature>
<feature type="binding site" evidence="1">
    <location>
        <position position="38"/>
    </location>
    <ligand>
        <name>ATP</name>
        <dbReference type="ChEBI" id="CHEBI:30616"/>
    </ligand>
</feature>
<feature type="binding site" evidence="1">
    <location>
        <position position="127"/>
    </location>
    <ligand>
        <name>ATP</name>
        <dbReference type="ChEBI" id="CHEBI:30616"/>
    </ligand>
</feature>
<feature type="site" description="Interaction with tRNA" evidence="1">
    <location>
        <position position="128"/>
    </location>
</feature>
<feature type="site" description="Interaction with tRNA" evidence="1">
    <location>
        <position position="344"/>
    </location>
</feature>
<feature type="disulfide bond" description="Alternate" evidence="1">
    <location>
        <begin position="103"/>
        <end position="200"/>
    </location>
</feature>
<protein>
    <recommendedName>
        <fullName evidence="1">tRNA-specific 2-thiouridylase MnmA</fullName>
        <ecNumber evidence="1">2.8.1.13</ecNumber>
    </recommendedName>
</protein>
<gene>
    <name evidence="1" type="primary">mnmA</name>
    <name type="ordered locus">SPN23F01320</name>
</gene>
<evidence type="ECO:0000255" key="1">
    <source>
        <dbReference type="HAMAP-Rule" id="MF_00144"/>
    </source>
</evidence>
<sequence>MSDNSKTRVVVGMSGGVDSSVTALLLKEQGYDVIGIFMKNWDDTDENGVCTATEDYKDVVAVADQIGIPYYSVNFEKEYWDRVFEYFLAEYRAGRTPNPDVMCNKEIKFKAFLDYAITLGADYVATGHYARVARDEDGTVHMLRGVDNGKDQTYFLSQLSQEQLQKTMFPLGHLEKPEVRKLAEEAGLSTAKKKDSTGICFIGEKNFKNFLSNYLPAQPGRMMTVDGRDMGEHAGLMYYTIGQRGGLGIGGQHGGDNAPWFVVGKDLSKNILYVGQGFYHDSLMSTSLEASQVHFTREMPEEFTLECTAKFRYRQPDSKVTVHVKGDKAEVIFAEPQRAITPGQAVVFYDGEECLGGGLIDNAYRDGQVCQYI</sequence>
<dbReference type="EC" id="2.8.1.13" evidence="1"/>
<dbReference type="EMBL" id="FM211187">
    <property type="protein sequence ID" value="CAR67990.1"/>
    <property type="molecule type" value="Genomic_DNA"/>
</dbReference>
<dbReference type="RefSeq" id="WP_001282967.1">
    <property type="nucleotide sequence ID" value="NC_011900.1"/>
</dbReference>
<dbReference type="SMR" id="B8ZK04"/>
<dbReference type="KEGG" id="sne:SPN23F01320"/>
<dbReference type="HOGENOM" id="CLU_035188_1_0_9"/>
<dbReference type="GO" id="GO:0005737">
    <property type="term" value="C:cytoplasm"/>
    <property type="evidence" value="ECO:0007669"/>
    <property type="project" value="UniProtKB-SubCell"/>
</dbReference>
<dbReference type="GO" id="GO:0005524">
    <property type="term" value="F:ATP binding"/>
    <property type="evidence" value="ECO:0007669"/>
    <property type="project" value="UniProtKB-KW"/>
</dbReference>
<dbReference type="GO" id="GO:0000049">
    <property type="term" value="F:tRNA binding"/>
    <property type="evidence" value="ECO:0007669"/>
    <property type="project" value="UniProtKB-KW"/>
</dbReference>
<dbReference type="GO" id="GO:0103016">
    <property type="term" value="F:tRNA-uridine 2-sulfurtransferase activity"/>
    <property type="evidence" value="ECO:0007669"/>
    <property type="project" value="UniProtKB-EC"/>
</dbReference>
<dbReference type="GO" id="GO:0002143">
    <property type="term" value="P:tRNA wobble position uridine thiolation"/>
    <property type="evidence" value="ECO:0007669"/>
    <property type="project" value="TreeGrafter"/>
</dbReference>
<dbReference type="CDD" id="cd01998">
    <property type="entry name" value="MnmA_TRMU-like"/>
    <property type="match status" value="1"/>
</dbReference>
<dbReference type="FunFam" id="2.30.30.280:FF:000001">
    <property type="entry name" value="tRNA-specific 2-thiouridylase MnmA"/>
    <property type="match status" value="1"/>
</dbReference>
<dbReference type="FunFam" id="2.40.30.10:FF:000023">
    <property type="entry name" value="tRNA-specific 2-thiouridylase MnmA"/>
    <property type="match status" value="1"/>
</dbReference>
<dbReference type="FunFam" id="3.40.50.620:FF:000004">
    <property type="entry name" value="tRNA-specific 2-thiouridylase MnmA"/>
    <property type="match status" value="1"/>
</dbReference>
<dbReference type="Gene3D" id="2.30.30.280">
    <property type="entry name" value="Adenine nucleotide alpha hydrolases-like domains"/>
    <property type="match status" value="1"/>
</dbReference>
<dbReference type="Gene3D" id="3.40.50.620">
    <property type="entry name" value="HUPs"/>
    <property type="match status" value="1"/>
</dbReference>
<dbReference type="Gene3D" id="2.40.30.10">
    <property type="entry name" value="Translation factors"/>
    <property type="match status" value="1"/>
</dbReference>
<dbReference type="HAMAP" id="MF_00144">
    <property type="entry name" value="tRNA_thiouridyl_MnmA"/>
    <property type="match status" value="1"/>
</dbReference>
<dbReference type="InterPro" id="IPR004506">
    <property type="entry name" value="MnmA-like"/>
</dbReference>
<dbReference type="InterPro" id="IPR046885">
    <property type="entry name" value="MnmA-like_C"/>
</dbReference>
<dbReference type="InterPro" id="IPR046884">
    <property type="entry name" value="MnmA-like_central"/>
</dbReference>
<dbReference type="InterPro" id="IPR023382">
    <property type="entry name" value="MnmA-like_central_sf"/>
</dbReference>
<dbReference type="InterPro" id="IPR014729">
    <property type="entry name" value="Rossmann-like_a/b/a_fold"/>
</dbReference>
<dbReference type="NCBIfam" id="NF001138">
    <property type="entry name" value="PRK00143.1"/>
    <property type="match status" value="1"/>
</dbReference>
<dbReference type="NCBIfam" id="TIGR00420">
    <property type="entry name" value="trmU"/>
    <property type="match status" value="1"/>
</dbReference>
<dbReference type="PANTHER" id="PTHR11933:SF5">
    <property type="entry name" value="MITOCHONDRIAL TRNA-SPECIFIC 2-THIOURIDYLASE 1"/>
    <property type="match status" value="1"/>
</dbReference>
<dbReference type="PANTHER" id="PTHR11933">
    <property type="entry name" value="TRNA 5-METHYLAMINOMETHYL-2-THIOURIDYLATE -METHYLTRANSFERASE"/>
    <property type="match status" value="1"/>
</dbReference>
<dbReference type="Pfam" id="PF03054">
    <property type="entry name" value="tRNA_Me_trans"/>
    <property type="match status" value="1"/>
</dbReference>
<dbReference type="Pfam" id="PF20258">
    <property type="entry name" value="tRNA_Me_trans_C"/>
    <property type="match status" value="1"/>
</dbReference>
<dbReference type="Pfam" id="PF20259">
    <property type="entry name" value="tRNA_Me_trans_M"/>
    <property type="match status" value="1"/>
</dbReference>
<dbReference type="SUPFAM" id="SSF52402">
    <property type="entry name" value="Adenine nucleotide alpha hydrolases-like"/>
    <property type="match status" value="1"/>
</dbReference>
<reference key="1">
    <citation type="journal article" date="2009" name="J. Bacteriol.">
        <title>Role of conjugative elements in the evolution of the multidrug-resistant pandemic clone Streptococcus pneumoniae Spain23F ST81.</title>
        <authorList>
            <person name="Croucher N.J."/>
            <person name="Walker D."/>
            <person name="Romero P."/>
            <person name="Lennard N."/>
            <person name="Paterson G.K."/>
            <person name="Bason N.C."/>
            <person name="Mitchell A.M."/>
            <person name="Quail M.A."/>
            <person name="Andrew P.W."/>
            <person name="Parkhill J."/>
            <person name="Bentley S.D."/>
            <person name="Mitchell T.J."/>
        </authorList>
    </citation>
    <scope>NUCLEOTIDE SEQUENCE [LARGE SCALE GENOMIC DNA]</scope>
    <source>
        <strain>ATCC 700669 / Spain 23F-1</strain>
    </source>
</reference>
<comment type="function">
    <text evidence="1">Catalyzes the 2-thiolation of uridine at the wobble position (U34) of tRNA, leading to the formation of s(2)U34.</text>
</comment>
<comment type="catalytic activity">
    <reaction evidence="1">
        <text>S-sulfanyl-L-cysteinyl-[protein] + uridine(34) in tRNA + AH2 + ATP = 2-thiouridine(34) in tRNA + L-cysteinyl-[protein] + A + AMP + diphosphate + H(+)</text>
        <dbReference type="Rhea" id="RHEA:47032"/>
        <dbReference type="Rhea" id="RHEA-COMP:10131"/>
        <dbReference type="Rhea" id="RHEA-COMP:11726"/>
        <dbReference type="Rhea" id="RHEA-COMP:11727"/>
        <dbReference type="Rhea" id="RHEA-COMP:11728"/>
        <dbReference type="ChEBI" id="CHEBI:13193"/>
        <dbReference type="ChEBI" id="CHEBI:15378"/>
        <dbReference type="ChEBI" id="CHEBI:17499"/>
        <dbReference type="ChEBI" id="CHEBI:29950"/>
        <dbReference type="ChEBI" id="CHEBI:30616"/>
        <dbReference type="ChEBI" id="CHEBI:33019"/>
        <dbReference type="ChEBI" id="CHEBI:61963"/>
        <dbReference type="ChEBI" id="CHEBI:65315"/>
        <dbReference type="ChEBI" id="CHEBI:87170"/>
        <dbReference type="ChEBI" id="CHEBI:456215"/>
        <dbReference type="EC" id="2.8.1.13"/>
    </reaction>
</comment>
<comment type="subcellular location">
    <subcellularLocation>
        <location evidence="1">Cytoplasm</location>
    </subcellularLocation>
</comment>
<comment type="similarity">
    <text evidence="1">Belongs to the MnmA/TRMU family.</text>
</comment>
<organism>
    <name type="scientific">Streptococcus pneumoniae (strain ATCC 700669 / Spain 23F-1)</name>
    <dbReference type="NCBI Taxonomy" id="561276"/>
    <lineage>
        <taxon>Bacteria</taxon>
        <taxon>Bacillati</taxon>
        <taxon>Bacillota</taxon>
        <taxon>Bacilli</taxon>
        <taxon>Lactobacillales</taxon>
        <taxon>Streptococcaceae</taxon>
        <taxon>Streptococcus</taxon>
    </lineage>
</organism>
<keyword id="KW-0067">ATP-binding</keyword>
<keyword id="KW-0963">Cytoplasm</keyword>
<keyword id="KW-1015">Disulfide bond</keyword>
<keyword id="KW-0547">Nucleotide-binding</keyword>
<keyword id="KW-0694">RNA-binding</keyword>
<keyword id="KW-0808">Transferase</keyword>
<keyword id="KW-0819">tRNA processing</keyword>
<keyword id="KW-0820">tRNA-binding</keyword>
<proteinExistence type="inferred from homology"/>